<organism>
    <name type="scientific">Francisella tularensis subsp. tularensis (strain SCHU S4 / Schu 4)</name>
    <dbReference type="NCBI Taxonomy" id="177416"/>
    <lineage>
        <taxon>Bacteria</taxon>
        <taxon>Pseudomonadati</taxon>
        <taxon>Pseudomonadota</taxon>
        <taxon>Gammaproteobacteria</taxon>
        <taxon>Thiotrichales</taxon>
        <taxon>Francisellaceae</taxon>
        <taxon>Francisella</taxon>
    </lineage>
</organism>
<comment type="function">
    <text evidence="4">Involved in the biosynthesis of 3-deoxy-D-manno-octulosonate (KDO), a unique 8-carbon sugar component of lipopolysaccharides (LPSs). Catalyzes the reversible aldol-ketol isomerization between D-ribulose 5-phosphate (Ru5P) and D-arabinose 5-phosphate (A5P).</text>
</comment>
<comment type="catalytic activity">
    <reaction evidence="4">
        <text>D-arabinose 5-phosphate = D-ribulose 5-phosphate</text>
        <dbReference type="Rhea" id="RHEA:23104"/>
        <dbReference type="ChEBI" id="CHEBI:57693"/>
        <dbReference type="ChEBI" id="CHEBI:58121"/>
        <dbReference type="EC" id="5.3.1.13"/>
    </reaction>
</comment>
<comment type="activity regulation">
    <text evidence="4">Inhibited by hydroxamates, mimicking the putative enediol reaction intermediate. Most potent inhibition, with an IC(50) of 0.7 uM, is obtained with the 4 carbon-based hydroxamate containing acetyl moieties.</text>
</comment>
<comment type="biophysicochemical properties">
    <kinetics>
        <KM evidence="4">0.38 mM for A5P (at pH 8.5 and at 37 degrees Celsius)</KM>
    </kinetics>
</comment>
<comment type="pathway">
    <text>Carbohydrate biosynthesis; 3-deoxy-D-manno-octulosonate biosynthesis; 3-deoxy-D-manno-octulosonate from D-ribulose 5-phosphate: step 1/3.</text>
</comment>
<comment type="pathway">
    <text>Bacterial outer membrane biogenesis; lipopolysaccharide biosynthesis.</text>
</comment>
<comment type="subunit">
    <text evidence="1">Homotetramer.</text>
</comment>
<comment type="similarity">
    <text evidence="5">Belongs to the SIS family. GutQ/KpsF subfamily.</text>
</comment>
<keyword id="KW-0119">Carbohydrate metabolism</keyword>
<keyword id="KW-0129">CBS domain</keyword>
<keyword id="KW-0413">Isomerase</keyword>
<keyword id="KW-0448">Lipopolysaccharide biosynthesis</keyword>
<keyword id="KW-0479">Metal-binding</keyword>
<keyword id="KW-1185">Reference proteome</keyword>
<keyword id="KW-0677">Repeat</keyword>
<keyword id="KW-0862">Zinc</keyword>
<reference key="1">
    <citation type="journal article" date="2005" name="Nat. Genet.">
        <title>The complete genome sequence of Francisella tularensis, the causative agent of tularemia.</title>
        <authorList>
            <person name="Larsson P."/>
            <person name="Oyston P.C.F."/>
            <person name="Chain P."/>
            <person name="Chu M.C."/>
            <person name="Duffield M."/>
            <person name="Fuxelius H.-H."/>
            <person name="Garcia E."/>
            <person name="Haelltorp G."/>
            <person name="Johansson D."/>
            <person name="Isherwood K.E."/>
            <person name="Karp P.D."/>
            <person name="Larsson E."/>
            <person name="Liu Y."/>
            <person name="Michell S."/>
            <person name="Prior J."/>
            <person name="Prior R."/>
            <person name="Malfatti S."/>
            <person name="Sjoestedt A."/>
            <person name="Svensson K."/>
            <person name="Thompson N."/>
            <person name="Vergez L."/>
            <person name="Wagg J.K."/>
            <person name="Wren B.W."/>
            <person name="Lindler L.E."/>
            <person name="Andersson S.G.E."/>
            <person name="Forsman M."/>
            <person name="Titball R.W."/>
        </authorList>
    </citation>
    <scope>NUCLEOTIDE SEQUENCE [LARGE SCALE GENOMIC DNA]</scope>
    <source>
        <strain>SCHU S4 / Schu 4</strain>
    </source>
</reference>
<reference key="2">
    <citation type="journal article" date="2011" name="Bioorg. Med. Chem. Lett.">
        <title>Enediol mimics as inhibitors of the D-arabinose 5-phosphate isomerase (KdsD) from Francisella tularensis.</title>
        <authorList>
            <person name="Yep A."/>
            <person name="Sorenson R.J."/>
            <person name="Wilson M.R."/>
            <person name="Showalter H.D."/>
            <person name="Larsen S.D."/>
            <person name="Keller P.R."/>
            <person name="Woodard R.W."/>
        </authorList>
    </citation>
    <scope>FUNCTION</scope>
    <scope>CATALYTIC ACTIVITY</scope>
    <scope>ACTIVITY REGULATION</scope>
    <scope>BIOPHYSICOCHEMICAL PROPERTIES</scope>
    <source>
        <strain>SCHU S4 / Schu 4</strain>
    </source>
</reference>
<name>KDSD_FRATT</name>
<sequence length="327" mass="35691">MEISMTSHINNAVETFRLEIETLEKLKNSIDENFEKACEIILENNRDKSRVIITGMGKSGHIGKKMAATFASTGTPAFFVHPGEAGHGDFGMITKNDVLIAISNSGTSSEIMGLLPMIKHLDIPIIAITSNPKSILARNSNVTLNLHVDKEACPLNLAPTSSTTATLVLGDALAIALLKAKNFSEKDFAFSHPNGALGRKLILKVENIMRKGNEIPIVKPTDNIRKAILEISDKGVGNTLVAENNTLLGIFTDGDLRRMFEAESFNSQRAISEVMTKNPKSISKEEMAITALEKMEKYEITSLAVVDNGHNILGIVTMHDLIKLELR</sequence>
<accession>Q5NGP7</accession>
<feature type="chain" id="PRO_0000417166" description="Arabinose 5-phosphate isomerase KdsD">
    <location>
        <begin position="1"/>
        <end position="327"/>
    </location>
</feature>
<feature type="domain" description="SIS" evidence="3">
    <location>
        <begin position="41"/>
        <end position="183"/>
    </location>
</feature>
<feature type="domain" description="CBS 1" evidence="2">
    <location>
        <begin position="209"/>
        <end position="268"/>
    </location>
</feature>
<feature type="domain" description="CBS 2" evidence="2">
    <location>
        <begin position="275"/>
        <end position="327"/>
    </location>
</feature>
<feature type="binding site" evidence="1">
    <location>
        <begin position="74"/>
        <end position="75"/>
    </location>
    <ligand>
        <name>substrate</name>
    </ligand>
</feature>
<feature type="binding site" evidence="1">
    <location>
        <position position="81"/>
    </location>
    <ligand>
        <name>substrate</name>
    </ligand>
</feature>
<feature type="binding site" evidence="1">
    <location>
        <position position="81"/>
    </location>
    <ligand>
        <name>Zn(2+)</name>
        <dbReference type="ChEBI" id="CHEBI:29105"/>
    </ligand>
</feature>
<feature type="binding site" evidence="1">
    <location>
        <position position="87"/>
    </location>
    <ligand>
        <name>substrate</name>
    </ligand>
</feature>
<feature type="binding site" evidence="1">
    <location>
        <begin position="113"/>
        <end position="122"/>
    </location>
    <ligand>
        <name>substrate</name>
    </ligand>
</feature>
<feature type="binding site" evidence="1">
    <location>
        <begin position="147"/>
        <end position="149"/>
    </location>
    <ligand>
        <name>substrate</name>
    </ligand>
</feature>
<feature type="binding site" evidence="1">
    <location>
        <position position="221"/>
    </location>
    <ligand>
        <name>substrate</name>
    </ligand>
</feature>
<feature type="binding site" evidence="1">
    <location>
        <position position="273"/>
    </location>
    <ligand>
        <name>substrate</name>
    </ligand>
</feature>
<feature type="site" description="Catalytically relevant" evidence="1">
    <location>
        <position position="58"/>
    </location>
</feature>
<feature type="site" description="Catalytically relevant" evidence="1">
    <location>
        <position position="110"/>
    </location>
</feature>
<feature type="site" description="Catalytically relevant" evidence="1">
    <location>
        <position position="151"/>
    </location>
</feature>
<feature type="site" description="Catalytically relevant" evidence="1">
    <location>
        <position position="192"/>
    </location>
</feature>
<evidence type="ECO:0000250" key="1"/>
<evidence type="ECO:0000255" key="2">
    <source>
        <dbReference type="PROSITE-ProRule" id="PRU00703"/>
    </source>
</evidence>
<evidence type="ECO:0000255" key="3">
    <source>
        <dbReference type="PROSITE-ProRule" id="PRU00797"/>
    </source>
</evidence>
<evidence type="ECO:0000269" key="4">
    <source>
    </source>
</evidence>
<evidence type="ECO:0000305" key="5"/>
<protein>
    <recommendedName>
        <fullName>Arabinose 5-phosphate isomerase KdsD</fullName>
        <shortName>API</shortName>
        <ecNumber>5.3.1.13</ecNumber>
    </recommendedName>
</protein>
<proteinExistence type="evidence at protein level"/>
<gene>
    <name type="primary">kdsD</name>
    <name type="ordered locus">FTT_0788c</name>
</gene>
<dbReference type="EC" id="5.3.1.13"/>
<dbReference type="EMBL" id="AJ749949">
    <property type="protein sequence ID" value="CAG45421.1"/>
    <property type="molecule type" value="Genomic_DNA"/>
</dbReference>
<dbReference type="RefSeq" id="YP_169795.1">
    <property type="nucleotide sequence ID" value="NC_006570.2"/>
</dbReference>
<dbReference type="SMR" id="Q5NGP7"/>
<dbReference type="STRING" id="177416.FTT_0788c"/>
<dbReference type="BindingDB" id="Q5NGP7"/>
<dbReference type="ChEMBL" id="CHEMBL1770042"/>
<dbReference type="DNASU" id="3192129"/>
<dbReference type="EnsemblBacteria" id="CAG45421">
    <property type="protein sequence ID" value="CAG45421"/>
    <property type="gene ID" value="FTT_0788c"/>
</dbReference>
<dbReference type="KEGG" id="ftu:FTT_0788c"/>
<dbReference type="eggNOG" id="COG0517">
    <property type="taxonomic scope" value="Bacteria"/>
</dbReference>
<dbReference type="eggNOG" id="COG0794">
    <property type="taxonomic scope" value="Bacteria"/>
</dbReference>
<dbReference type="OrthoDB" id="9762536at2"/>
<dbReference type="SABIO-RK" id="Q5NGP7"/>
<dbReference type="UniPathway" id="UPA00030"/>
<dbReference type="UniPathway" id="UPA00357">
    <property type="reaction ID" value="UER00473"/>
</dbReference>
<dbReference type="PHI-base" id="PHI:7067"/>
<dbReference type="Proteomes" id="UP000001174">
    <property type="component" value="Chromosome"/>
</dbReference>
<dbReference type="GO" id="GO:0019146">
    <property type="term" value="F:arabinose-5-phosphate isomerase activity"/>
    <property type="evidence" value="ECO:0007669"/>
    <property type="project" value="UniProtKB-EC"/>
</dbReference>
<dbReference type="GO" id="GO:0097367">
    <property type="term" value="F:carbohydrate derivative binding"/>
    <property type="evidence" value="ECO:0007669"/>
    <property type="project" value="InterPro"/>
</dbReference>
<dbReference type="GO" id="GO:0046872">
    <property type="term" value="F:metal ion binding"/>
    <property type="evidence" value="ECO:0007669"/>
    <property type="project" value="UniProtKB-KW"/>
</dbReference>
<dbReference type="GO" id="GO:0009103">
    <property type="term" value="P:lipopolysaccharide biosynthetic process"/>
    <property type="evidence" value="ECO:0007669"/>
    <property type="project" value="UniProtKB-UniPathway"/>
</dbReference>
<dbReference type="CDD" id="cd04604">
    <property type="entry name" value="CBS_pair_SIS_assoc"/>
    <property type="match status" value="1"/>
</dbReference>
<dbReference type="CDD" id="cd05014">
    <property type="entry name" value="SIS_Kpsf"/>
    <property type="match status" value="1"/>
</dbReference>
<dbReference type="FunFam" id="3.40.50.10490:FF:000011">
    <property type="entry name" value="Arabinose 5-phosphate isomerase"/>
    <property type="match status" value="1"/>
</dbReference>
<dbReference type="Gene3D" id="3.10.580.10">
    <property type="entry name" value="CBS-domain"/>
    <property type="match status" value="1"/>
</dbReference>
<dbReference type="Gene3D" id="3.40.50.10490">
    <property type="entry name" value="Glucose-6-phosphate isomerase like protein, domain 1"/>
    <property type="match status" value="1"/>
</dbReference>
<dbReference type="InterPro" id="IPR000644">
    <property type="entry name" value="CBS_dom"/>
</dbReference>
<dbReference type="InterPro" id="IPR046342">
    <property type="entry name" value="CBS_dom_sf"/>
</dbReference>
<dbReference type="InterPro" id="IPR050986">
    <property type="entry name" value="GutQ/KpsF_isomerases"/>
</dbReference>
<dbReference type="InterPro" id="IPR004800">
    <property type="entry name" value="KdsD/KpsF-type"/>
</dbReference>
<dbReference type="InterPro" id="IPR001347">
    <property type="entry name" value="SIS_dom"/>
</dbReference>
<dbReference type="InterPro" id="IPR046348">
    <property type="entry name" value="SIS_dom_sf"/>
</dbReference>
<dbReference type="InterPro" id="IPR035474">
    <property type="entry name" value="SIS_Kpsf"/>
</dbReference>
<dbReference type="NCBIfam" id="TIGR00393">
    <property type="entry name" value="kpsF"/>
    <property type="match status" value="1"/>
</dbReference>
<dbReference type="PANTHER" id="PTHR42745">
    <property type="match status" value="1"/>
</dbReference>
<dbReference type="PANTHER" id="PTHR42745:SF1">
    <property type="entry name" value="ARABINOSE 5-PHOSPHATE ISOMERASE KDSD"/>
    <property type="match status" value="1"/>
</dbReference>
<dbReference type="Pfam" id="PF00571">
    <property type="entry name" value="CBS"/>
    <property type="match status" value="2"/>
</dbReference>
<dbReference type="Pfam" id="PF01380">
    <property type="entry name" value="SIS"/>
    <property type="match status" value="1"/>
</dbReference>
<dbReference type="PIRSF" id="PIRSF004692">
    <property type="entry name" value="KdsD_KpsF"/>
    <property type="match status" value="1"/>
</dbReference>
<dbReference type="SMART" id="SM00116">
    <property type="entry name" value="CBS"/>
    <property type="match status" value="2"/>
</dbReference>
<dbReference type="SUPFAM" id="SSF53697">
    <property type="entry name" value="SIS domain"/>
    <property type="match status" value="1"/>
</dbReference>
<dbReference type="PROSITE" id="PS51371">
    <property type="entry name" value="CBS"/>
    <property type="match status" value="2"/>
</dbReference>
<dbReference type="PROSITE" id="PS51464">
    <property type="entry name" value="SIS"/>
    <property type="match status" value="1"/>
</dbReference>